<evidence type="ECO:0000255" key="1">
    <source>
        <dbReference type="HAMAP-Rule" id="MF_00682"/>
    </source>
</evidence>
<comment type="function">
    <text evidence="1">Co-chaperone involved in the maturation of iron-sulfur cluster-containing proteins. Seems to help targeting proteins to be folded toward HscA.</text>
</comment>
<comment type="subunit">
    <text evidence="1">Interacts with HscA and stimulates its ATPase activity.</text>
</comment>
<comment type="similarity">
    <text evidence="1">Belongs to the HscB family.</text>
</comment>
<protein>
    <recommendedName>
        <fullName evidence="1">Co-chaperone protein HscB homolog</fullName>
    </recommendedName>
</protein>
<feature type="chain" id="PRO_1000083001" description="Co-chaperone protein HscB homolog">
    <location>
        <begin position="1"/>
        <end position="175"/>
    </location>
</feature>
<feature type="domain" description="J" evidence="1">
    <location>
        <begin position="7"/>
        <end position="79"/>
    </location>
</feature>
<organism>
    <name type="scientific">Burkholderia thailandensis (strain ATCC 700388 / DSM 13276 / CCUG 48851 / CIP 106301 / E264)</name>
    <dbReference type="NCBI Taxonomy" id="271848"/>
    <lineage>
        <taxon>Bacteria</taxon>
        <taxon>Pseudomonadati</taxon>
        <taxon>Pseudomonadota</taxon>
        <taxon>Betaproteobacteria</taxon>
        <taxon>Burkholderiales</taxon>
        <taxon>Burkholderiaceae</taxon>
        <taxon>Burkholderia</taxon>
        <taxon>pseudomallei group</taxon>
    </lineage>
</organism>
<dbReference type="EMBL" id="CP000086">
    <property type="protein sequence ID" value="ABC39114.1"/>
    <property type="molecule type" value="Genomic_DNA"/>
</dbReference>
<dbReference type="RefSeq" id="WP_009890167.1">
    <property type="nucleotide sequence ID" value="NC_007651.1"/>
</dbReference>
<dbReference type="SMR" id="Q2SXE1"/>
<dbReference type="GeneID" id="45121610"/>
<dbReference type="KEGG" id="bte:BTH_I1878"/>
<dbReference type="HOGENOM" id="CLU_068529_2_1_4"/>
<dbReference type="Proteomes" id="UP000001930">
    <property type="component" value="Chromosome I"/>
</dbReference>
<dbReference type="GO" id="GO:1990230">
    <property type="term" value="C:iron-sulfur cluster transfer complex"/>
    <property type="evidence" value="ECO:0007669"/>
    <property type="project" value="TreeGrafter"/>
</dbReference>
<dbReference type="GO" id="GO:0001671">
    <property type="term" value="F:ATPase activator activity"/>
    <property type="evidence" value="ECO:0007669"/>
    <property type="project" value="InterPro"/>
</dbReference>
<dbReference type="GO" id="GO:0051087">
    <property type="term" value="F:protein-folding chaperone binding"/>
    <property type="evidence" value="ECO:0007669"/>
    <property type="project" value="InterPro"/>
</dbReference>
<dbReference type="GO" id="GO:0044571">
    <property type="term" value="P:[2Fe-2S] cluster assembly"/>
    <property type="evidence" value="ECO:0007669"/>
    <property type="project" value="InterPro"/>
</dbReference>
<dbReference type="GO" id="GO:0051259">
    <property type="term" value="P:protein complex oligomerization"/>
    <property type="evidence" value="ECO:0007669"/>
    <property type="project" value="InterPro"/>
</dbReference>
<dbReference type="GO" id="GO:0006457">
    <property type="term" value="P:protein folding"/>
    <property type="evidence" value="ECO:0007669"/>
    <property type="project" value="UniProtKB-UniRule"/>
</dbReference>
<dbReference type="CDD" id="cd06257">
    <property type="entry name" value="DnaJ"/>
    <property type="match status" value="1"/>
</dbReference>
<dbReference type="Gene3D" id="1.10.287.110">
    <property type="entry name" value="DnaJ domain"/>
    <property type="match status" value="1"/>
</dbReference>
<dbReference type="Gene3D" id="1.20.1280.20">
    <property type="entry name" value="HscB, C-terminal domain"/>
    <property type="match status" value="1"/>
</dbReference>
<dbReference type="HAMAP" id="MF_00682">
    <property type="entry name" value="HscB"/>
    <property type="match status" value="1"/>
</dbReference>
<dbReference type="InterPro" id="IPR001623">
    <property type="entry name" value="DnaJ_domain"/>
</dbReference>
<dbReference type="InterPro" id="IPR004640">
    <property type="entry name" value="HscB"/>
</dbReference>
<dbReference type="InterPro" id="IPR036386">
    <property type="entry name" value="HscB_C_sf"/>
</dbReference>
<dbReference type="InterPro" id="IPR009073">
    <property type="entry name" value="HscB_oligo_C"/>
</dbReference>
<dbReference type="InterPro" id="IPR036869">
    <property type="entry name" value="J_dom_sf"/>
</dbReference>
<dbReference type="NCBIfam" id="TIGR00714">
    <property type="entry name" value="hscB"/>
    <property type="match status" value="1"/>
</dbReference>
<dbReference type="NCBIfam" id="NF002935">
    <property type="entry name" value="PRK03578.1"/>
    <property type="match status" value="1"/>
</dbReference>
<dbReference type="PANTHER" id="PTHR14021">
    <property type="entry name" value="IRON-SULFUR CLUSTER CO-CHAPERONE PROTEIN HSCB"/>
    <property type="match status" value="1"/>
</dbReference>
<dbReference type="PANTHER" id="PTHR14021:SF15">
    <property type="entry name" value="IRON-SULFUR CLUSTER CO-CHAPERONE PROTEIN HSCB"/>
    <property type="match status" value="1"/>
</dbReference>
<dbReference type="Pfam" id="PF07743">
    <property type="entry name" value="HSCB_C"/>
    <property type="match status" value="1"/>
</dbReference>
<dbReference type="SMART" id="SM00271">
    <property type="entry name" value="DnaJ"/>
    <property type="match status" value="1"/>
</dbReference>
<dbReference type="SUPFAM" id="SSF46565">
    <property type="entry name" value="Chaperone J-domain"/>
    <property type="match status" value="1"/>
</dbReference>
<dbReference type="SUPFAM" id="SSF47144">
    <property type="entry name" value="HSC20 (HSCB), C-terminal oligomerisation domain"/>
    <property type="match status" value="1"/>
</dbReference>
<dbReference type="PROSITE" id="PS50076">
    <property type="entry name" value="DNAJ_2"/>
    <property type="match status" value="1"/>
</dbReference>
<accession>Q2SXE1</accession>
<sequence length="175" mass="19629">MVSLKDSHFELFHLPAQFALDEPTLDAAYRAVQSQVHPDRFAAAGDAQKRVAMQWATRANEAYQTLRDPLKRATYLLHLRGVDVGAENNTAMEPAFLMQQMEWRERIEDAAAAKNVGELDALLDELRDERRARLAKLGSLLDSGSDQGAAEAVRQLMFVERVSAEIGAQIERLEH</sequence>
<proteinExistence type="inferred from homology"/>
<keyword id="KW-0143">Chaperone</keyword>
<gene>
    <name evidence="1" type="primary">hscB</name>
    <name type="ordered locus">BTH_I1878</name>
</gene>
<reference key="1">
    <citation type="journal article" date="2005" name="BMC Genomics">
        <title>Bacterial genome adaptation to niches: divergence of the potential virulence genes in three Burkholderia species of different survival strategies.</title>
        <authorList>
            <person name="Kim H.S."/>
            <person name="Schell M.A."/>
            <person name="Yu Y."/>
            <person name="Ulrich R.L."/>
            <person name="Sarria S.H."/>
            <person name="Nierman W.C."/>
            <person name="DeShazer D."/>
        </authorList>
    </citation>
    <scope>NUCLEOTIDE SEQUENCE [LARGE SCALE GENOMIC DNA]</scope>
    <source>
        <strain>ATCC 700388 / DSM 13276 / CCUG 48851 / CIP 106301 / E264</strain>
    </source>
</reference>
<name>HSCB_BURTA</name>